<proteinExistence type="evidence at transcript level"/>
<protein>
    <recommendedName>
        <fullName>Ragulator complex protein LAMTOR3</fullName>
    </recommendedName>
    <alternativeName>
        <fullName>Late endosomal/lysosomal adaptor and MAPK and MTOR activator 3</fullName>
    </alternativeName>
</protein>
<feature type="chain" id="PRO_0000240659" description="Ragulator complex protein LAMTOR3">
    <location>
        <begin position="1"/>
        <end position="124"/>
    </location>
</feature>
<evidence type="ECO:0000250" key="1">
    <source>
        <dbReference type="UniProtKB" id="O88653"/>
    </source>
</evidence>
<evidence type="ECO:0000250" key="2">
    <source>
        <dbReference type="UniProtKB" id="Q9UHA4"/>
    </source>
</evidence>
<evidence type="ECO:0000305" key="3"/>
<name>LTOR3_CHICK</name>
<comment type="function">
    <text evidence="2">As part of the Ragulator complex it is involved in amino acid sensing and activation of mTORC1, a signaling complex promoting cell growth in response to growth factors, energy levels, and amino acids. Activated by amino acids through a mechanism involving the lysosomal V-ATPase, the Ragulator plays a dual role for the small GTPases Rag (RagA/RRAGA, RagB/RRAGB, RagC/RRAGC and/or RagD/RRAGD): it (1) acts as a guanine nucleotide exchange factor (GEF), activating the small GTPases Rag and (2) mediates recruitment of Rag GTPases to the lysosome membrane. Activated Ragulator and Rag GTPases function as a scaffold recruiting mTORC1 to lysosomes where it is in turn activated.</text>
</comment>
<comment type="subunit">
    <text evidence="1 2">Part of the Ragulator complex composed of LAMTOR1, LAMTOR2, LAMTOR3, LAMTOR4 and LAMTOR5. The Ragulator complex interacts with SLC38A9; the probable amino acid sensor. Component of the lysosomal folliculin complex (LFC).</text>
</comment>
<comment type="subcellular location">
    <subcellularLocation>
        <location evidence="1">Late endosome membrane</location>
        <topology evidence="1">Peripheral membrane protein</topology>
        <orientation evidence="1">Cytoplasmic side</orientation>
    </subcellularLocation>
    <text evidence="1">Recruited to lysosome and endosome membranes by LAMTOR1.</text>
</comment>
<comment type="similarity">
    <text evidence="3">Belongs to the LAMTOR3 family.</text>
</comment>
<keyword id="KW-0967">Endosome</keyword>
<keyword id="KW-0472">Membrane</keyword>
<keyword id="KW-1185">Reference proteome</keyword>
<dbReference type="EMBL" id="AJ720742">
    <property type="protein sequence ID" value="CAG32401.1"/>
    <property type="molecule type" value="mRNA"/>
</dbReference>
<dbReference type="RefSeq" id="NP_001006559.1">
    <property type="nucleotide sequence ID" value="NM_001006559.2"/>
</dbReference>
<dbReference type="SMR" id="Q5ZIP2"/>
<dbReference type="FunCoup" id="Q5ZIP2">
    <property type="interactions" value="2246"/>
</dbReference>
<dbReference type="STRING" id="9031.ENSGALP00000060460"/>
<dbReference type="PaxDb" id="9031-ENSGALP00000000069"/>
<dbReference type="GeneID" id="425210"/>
<dbReference type="KEGG" id="gga:425210"/>
<dbReference type="CTD" id="8649"/>
<dbReference type="VEuPathDB" id="HostDB:geneid_425210"/>
<dbReference type="eggNOG" id="ENOG502RYGZ">
    <property type="taxonomic scope" value="Eukaryota"/>
</dbReference>
<dbReference type="HOGENOM" id="CLU_134641_0_0_1"/>
<dbReference type="InParanoid" id="Q5ZIP2"/>
<dbReference type="OMA" id="YQVIQMN"/>
<dbReference type="OrthoDB" id="343907at2759"/>
<dbReference type="PhylomeDB" id="Q5ZIP2"/>
<dbReference type="TreeFam" id="TF324889"/>
<dbReference type="PRO" id="PR:Q5ZIP2"/>
<dbReference type="Proteomes" id="UP000000539">
    <property type="component" value="Unassembled WGS sequence"/>
</dbReference>
<dbReference type="GO" id="GO:0031902">
    <property type="term" value="C:late endosome membrane"/>
    <property type="evidence" value="ECO:0007669"/>
    <property type="project" value="UniProtKB-SubCell"/>
</dbReference>
<dbReference type="GO" id="GO:0005765">
    <property type="term" value="C:lysosomal membrane"/>
    <property type="evidence" value="ECO:0000250"/>
    <property type="project" value="UniProtKB"/>
</dbReference>
<dbReference type="GO" id="GO:0071986">
    <property type="term" value="C:Ragulator complex"/>
    <property type="evidence" value="ECO:0000250"/>
    <property type="project" value="UniProtKB"/>
</dbReference>
<dbReference type="GO" id="GO:0071230">
    <property type="term" value="P:cellular response to amino acid stimulus"/>
    <property type="evidence" value="ECO:0000250"/>
    <property type="project" value="UniProtKB"/>
</dbReference>
<dbReference type="GO" id="GO:0032008">
    <property type="term" value="P:positive regulation of TOR signaling"/>
    <property type="evidence" value="ECO:0000250"/>
    <property type="project" value="UniProtKB"/>
</dbReference>
<dbReference type="GO" id="GO:1904263">
    <property type="term" value="P:positive regulation of TORC1 signaling"/>
    <property type="evidence" value="ECO:0000250"/>
    <property type="project" value="UniProtKB"/>
</dbReference>
<dbReference type="GO" id="GO:0008104">
    <property type="term" value="P:protein localization"/>
    <property type="evidence" value="ECO:0000250"/>
    <property type="project" value="UniProtKB"/>
</dbReference>
<dbReference type="FunFam" id="3.30.450.30:FF:000003">
    <property type="entry name" value="ragulator complex protein LAMTOR3 homolog"/>
    <property type="match status" value="1"/>
</dbReference>
<dbReference type="Gene3D" id="3.30.450.30">
    <property type="entry name" value="Dynein light chain 2a, cytoplasmic"/>
    <property type="match status" value="1"/>
</dbReference>
<dbReference type="InterPro" id="IPR015019">
    <property type="entry name" value="LAMTOR3"/>
</dbReference>
<dbReference type="PANTHER" id="PTHR13378:SF1">
    <property type="entry name" value="RAGULATOR COMPLEX PROTEIN LAMTOR3"/>
    <property type="match status" value="1"/>
</dbReference>
<dbReference type="PANTHER" id="PTHR13378">
    <property type="entry name" value="REGULATOR COMPLEX PROTEIN LAMTOR3"/>
    <property type="match status" value="1"/>
</dbReference>
<dbReference type="Pfam" id="PF08923">
    <property type="entry name" value="MAPKK1_Int"/>
    <property type="match status" value="1"/>
</dbReference>
<dbReference type="SMART" id="SM01278">
    <property type="entry name" value="MAPKK1_Int"/>
    <property type="match status" value="1"/>
</dbReference>
<dbReference type="SUPFAM" id="SSF103196">
    <property type="entry name" value="Roadblock/LC7 domain"/>
    <property type="match status" value="1"/>
</dbReference>
<reference key="1">
    <citation type="journal article" date="2005" name="Genome Biol.">
        <title>Full-length cDNAs from chicken bursal lymphocytes to facilitate gene function analysis.</title>
        <authorList>
            <person name="Caldwell R.B."/>
            <person name="Kierzek A.M."/>
            <person name="Arakawa H."/>
            <person name="Bezzubov Y."/>
            <person name="Zaim J."/>
            <person name="Fiedler P."/>
            <person name="Kutter S."/>
            <person name="Blagodatski A."/>
            <person name="Kostovska D."/>
            <person name="Koter M."/>
            <person name="Plachy J."/>
            <person name="Carninci P."/>
            <person name="Hayashizaki Y."/>
            <person name="Buerstedde J.-M."/>
        </authorList>
    </citation>
    <scope>NUCLEOTIDE SEQUENCE [LARGE SCALE MRNA]</scope>
    <source>
        <strain>CB</strain>
        <tissue>Bursa of Fabricius</tissue>
    </source>
</reference>
<organism>
    <name type="scientific">Gallus gallus</name>
    <name type="common">Chicken</name>
    <dbReference type="NCBI Taxonomy" id="9031"/>
    <lineage>
        <taxon>Eukaryota</taxon>
        <taxon>Metazoa</taxon>
        <taxon>Chordata</taxon>
        <taxon>Craniata</taxon>
        <taxon>Vertebrata</taxon>
        <taxon>Euteleostomi</taxon>
        <taxon>Archelosauria</taxon>
        <taxon>Archosauria</taxon>
        <taxon>Dinosauria</taxon>
        <taxon>Saurischia</taxon>
        <taxon>Theropoda</taxon>
        <taxon>Coelurosauria</taxon>
        <taxon>Aves</taxon>
        <taxon>Neognathae</taxon>
        <taxon>Galloanserae</taxon>
        <taxon>Galliformes</taxon>
        <taxon>Phasianidae</taxon>
        <taxon>Phasianinae</taxon>
        <taxon>Gallus</taxon>
    </lineage>
</organism>
<gene>
    <name type="primary">LAMTOR3</name>
    <name type="ORF">RCJMB04_24i9</name>
</gene>
<sequence>MADDLKRFLYKKLPSVEGLHAIVVSDRDGVPVIKVANDNAPEHALRPGFLSTFALATDQGSKLGLSKNKSIICYYNTYQVVQFNRLPLVVSFIASSNANTGLIVSLEKELTPLFEELRQVVEVS</sequence>
<accession>Q5ZIP2</accession>